<organism>
    <name type="scientific">Magnetococcus marinus (strain ATCC BAA-1437 / JCM 17883 / MC-1)</name>
    <dbReference type="NCBI Taxonomy" id="156889"/>
    <lineage>
        <taxon>Bacteria</taxon>
        <taxon>Pseudomonadati</taxon>
        <taxon>Pseudomonadota</taxon>
        <taxon>Alphaproteobacteria</taxon>
        <taxon>Magnetococcales</taxon>
        <taxon>Magnetococcaceae</taxon>
        <taxon>Magnetococcus</taxon>
    </lineage>
</organism>
<reference key="1">
    <citation type="journal article" date="2009" name="Appl. Environ. Microbiol.">
        <title>Complete genome sequence of the chemolithoautotrophic marine magnetotactic coccus strain MC-1.</title>
        <authorList>
            <person name="Schubbe S."/>
            <person name="Williams T.J."/>
            <person name="Xie G."/>
            <person name="Kiss H.E."/>
            <person name="Brettin T.S."/>
            <person name="Martinez D."/>
            <person name="Ross C.A."/>
            <person name="Schuler D."/>
            <person name="Cox B.L."/>
            <person name="Nealson K.H."/>
            <person name="Bazylinski D.A."/>
        </authorList>
    </citation>
    <scope>NUCLEOTIDE SEQUENCE [LARGE SCALE GENOMIC DNA]</scope>
    <source>
        <strain>ATCC BAA-1437 / JCM 17883 / MC-1</strain>
    </source>
</reference>
<dbReference type="EC" id="7.1.2.2" evidence="1"/>
<dbReference type="EMBL" id="CP000471">
    <property type="protein sequence ID" value="ABK45943.1"/>
    <property type="molecule type" value="Genomic_DNA"/>
</dbReference>
<dbReference type="RefSeq" id="WP_011714999.1">
    <property type="nucleotide sequence ID" value="NC_008576.1"/>
</dbReference>
<dbReference type="SMR" id="A0LDA0"/>
<dbReference type="STRING" id="156889.Mmc1_3458"/>
<dbReference type="KEGG" id="mgm:Mmc1_3458"/>
<dbReference type="eggNOG" id="COG0055">
    <property type="taxonomic scope" value="Bacteria"/>
</dbReference>
<dbReference type="HOGENOM" id="CLU_022398_0_2_5"/>
<dbReference type="OrthoDB" id="9801639at2"/>
<dbReference type="Proteomes" id="UP000002586">
    <property type="component" value="Chromosome"/>
</dbReference>
<dbReference type="GO" id="GO:0005886">
    <property type="term" value="C:plasma membrane"/>
    <property type="evidence" value="ECO:0007669"/>
    <property type="project" value="UniProtKB-SubCell"/>
</dbReference>
<dbReference type="GO" id="GO:0045259">
    <property type="term" value="C:proton-transporting ATP synthase complex"/>
    <property type="evidence" value="ECO:0007669"/>
    <property type="project" value="UniProtKB-KW"/>
</dbReference>
<dbReference type="GO" id="GO:0005524">
    <property type="term" value="F:ATP binding"/>
    <property type="evidence" value="ECO:0007669"/>
    <property type="project" value="UniProtKB-UniRule"/>
</dbReference>
<dbReference type="GO" id="GO:0016887">
    <property type="term" value="F:ATP hydrolysis activity"/>
    <property type="evidence" value="ECO:0007669"/>
    <property type="project" value="InterPro"/>
</dbReference>
<dbReference type="GO" id="GO:0046933">
    <property type="term" value="F:proton-transporting ATP synthase activity, rotational mechanism"/>
    <property type="evidence" value="ECO:0007669"/>
    <property type="project" value="UniProtKB-UniRule"/>
</dbReference>
<dbReference type="CDD" id="cd18110">
    <property type="entry name" value="ATP-synt_F1_beta_C"/>
    <property type="match status" value="1"/>
</dbReference>
<dbReference type="CDD" id="cd18115">
    <property type="entry name" value="ATP-synt_F1_beta_N"/>
    <property type="match status" value="1"/>
</dbReference>
<dbReference type="CDD" id="cd01133">
    <property type="entry name" value="F1-ATPase_beta_CD"/>
    <property type="match status" value="1"/>
</dbReference>
<dbReference type="FunFam" id="1.10.1140.10:FF:000001">
    <property type="entry name" value="ATP synthase subunit beta"/>
    <property type="match status" value="1"/>
</dbReference>
<dbReference type="FunFam" id="2.40.10.170:FF:000005">
    <property type="entry name" value="ATP synthase subunit beta"/>
    <property type="match status" value="1"/>
</dbReference>
<dbReference type="FunFam" id="3.40.50.300:FF:000026">
    <property type="entry name" value="ATP synthase subunit beta"/>
    <property type="match status" value="1"/>
</dbReference>
<dbReference type="Gene3D" id="2.40.10.170">
    <property type="match status" value="1"/>
</dbReference>
<dbReference type="Gene3D" id="1.10.1140.10">
    <property type="entry name" value="Bovine Mitochondrial F1-atpase, Atp Synthase Beta Chain, Chain D, domain 3"/>
    <property type="match status" value="1"/>
</dbReference>
<dbReference type="Gene3D" id="3.40.50.300">
    <property type="entry name" value="P-loop containing nucleotide triphosphate hydrolases"/>
    <property type="match status" value="1"/>
</dbReference>
<dbReference type="HAMAP" id="MF_01347">
    <property type="entry name" value="ATP_synth_beta_bact"/>
    <property type="match status" value="1"/>
</dbReference>
<dbReference type="InterPro" id="IPR003593">
    <property type="entry name" value="AAA+_ATPase"/>
</dbReference>
<dbReference type="InterPro" id="IPR055190">
    <property type="entry name" value="ATP-synt_VA_C"/>
</dbReference>
<dbReference type="InterPro" id="IPR005722">
    <property type="entry name" value="ATP_synth_F1_bsu"/>
</dbReference>
<dbReference type="InterPro" id="IPR020003">
    <property type="entry name" value="ATPase_a/bsu_AS"/>
</dbReference>
<dbReference type="InterPro" id="IPR050053">
    <property type="entry name" value="ATPase_alpha/beta_chains"/>
</dbReference>
<dbReference type="InterPro" id="IPR004100">
    <property type="entry name" value="ATPase_F1/V1/A1_a/bsu_N"/>
</dbReference>
<dbReference type="InterPro" id="IPR036121">
    <property type="entry name" value="ATPase_F1/V1/A1_a/bsu_N_sf"/>
</dbReference>
<dbReference type="InterPro" id="IPR000194">
    <property type="entry name" value="ATPase_F1/V1/A1_a/bsu_nucl-bd"/>
</dbReference>
<dbReference type="InterPro" id="IPR024034">
    <property type="entry name" value="ATPase_F1/V1_b/a_C"/>
</dbReference>
<dbReference type="InterPro" id="IPR027417">
    <property type="entry name" value="P-loop_NTPase"/>
</dbReference>
<dbReference type="NCBIfam" id="TIGR01039">
    <property type="entry name" value="atpD"/>
    <property type="match status" value="1"/>
</dbReference>
<dbReference type="PANTHER" id="PTHR15184">
    <property type="entry name" value="ATP SYNTHASE"/>
    <property type="match status" value="1"/>
</dbReference>
<dbReference type="PANTHER" id="PTHR15184:SF71">
    <property type="entry name" value="ATP SYNTHASE SUBUNIT BETA, MITOCHONDRIAL"/>
    <property type="match status" value="1"/>
</dbReference>
<dbReference type="Pfam" id="PF00006">
    <property type="entry name" value="ATP-synt_ab"/>
    <property type="match status" value="1"/>
</dbReference>
<dbReference type="Pfam" id="PF02874">
    <property type="entry name" value="ATP-synt_ab_N"/>
    <property type="match status" value="1"/>
</dbReference>
<dbReference type="Pfam" id="PF22919">
    <property type="entry name" value="ATP-synt_VA_C"/>
    <property type="match status" value="1"/>
</dbReference>
<dbReference type="PIRSF" id="PIRSF039072">
    <property type="entry name" value="ATPase_subunit_beta"/>
    <property type="match status" value="1"/>
</dbReference>
<dbReference type="SMART" id="SM00382">
    <property type="entry name" value="AAA"/>
    <property type="match status" value="1"/>
</dbReference>
<dbReference type="SUPFAM" id="SSF47917">
    <property type="entry name" value="C-terminal domain of alpha and beta subunits of F1 ATP synthase"/>
    <property type="match status" value="1"/>
</dbReference>
<dbReference type="SUPFAM" id="SSF50615">
    <property type="entry name" value="N-terminal domain of alpha and beta subunits of F1 ATP synthase"/>
    <property type="match status" value="1"/>
</dbReference>
<dbReference type="SUPFAM" id="SSF52540">
    <property type="entry name" value="P-loop containing nucleoside triphosphate hydrolases"/>
    <property type="match status" value="1"/>
</dbReference>
<dbReference type="PROSITE" id="PS00152">
    <property type="entry name" value="ATPASE_ALPHA_BETA"/>
    <property type="match status" value="1"/>
</dbReference>
<name>ATPB_MAGMM</name>
<accession>A0LDA0</accession>
<gene>
    <name evidence="1" type="primary">atpD</name>
    <name type="ordered locus">Mmc1_3458</name>
</gene>
<evidence type="ECO:0000255" key="1">
    <source>
        <dbReference type="HAMAP-Rule" id="MF_01347"/>
    </source>
</evidence>
<protein>
    <recommendedName>
        <fullName evidence="1">ATP synthase subunit beta</fullName>
        <ecNumber evidence="1">7.1.2.2</ecNumber>
    </recommendedName>
    <alternativeName>
        <fullName evidence="1">ATP synthase F1 sector subunit beta</fullName>
    </alternativeName>
    <alternativeName>
        <fullName evidence="1">F-ATPase subunit beta</fullName>
    </alternativeName>
</protein>
<sequence length="474" mass="51050">MSVARTGKVVQVVGPVVDVRFEGELPNILNALHMVRNGERLVLEVATHMGEGTVRAIAMDSTDGVVRGMEVTDTGDTIRVPVGRQTLGRILNVVGEPQDEKGPVETTETLPIHRPAPAFAQQATSAEILETGIKVIDLLAPYAKGGKVGLFGGAGVGKTVLIMELINNVAQEHGGYSVFAGVGERTREGNDLYHEMAESGVIDPNSWENSKAALIYGQMNEPPGARARVALTGLTVAEYFRDLGGQDVLFFVDNIFRFTQAGAEVSALLGRIPSAVGYQPTLGTDMGALQERITTTKTGSITSVQAVYVPADDLTDPAPATTFSHLDATTVLNRAISEMGIYPAVDPLDSTSRVLDPKVVGEEHYHTAREVQRILQTYKSLQDIIAILGMDELSEEDKLVVNRARKIQRFLSQPFHVAEVFTGTKGVYVPVKKTVQGFKELCEGKYDNVPEAAFYMVSDIDAALAKAEKLKAAS</sequence>
<comment type="function">
    <text evidence="1">Produces ATP from ADP in the presence of a proton gradient across the membrane. The catalytic sites are hosted primarily by the beta subunits.</text>
</comment>
<comment type="catalytic activity">
    <reaction evidence="1">
        <text>ATP + H2O + 4 H(+)(in) = ADP + phosphate + 5 H(+)(out)</text>
        <dbReference type="Rhea" id="RHEA:57720"/>
        <dbReference type="ChEBI" id="CHEBI:15377"/>
        <dbReference type="ChEBI" id="CHEBI:15378"/>
        <dbReference type="ChEBI" id="CHEBI:30616"/>
        <dbReference type="ChEBI" id="CHEBI:43474"/>
        <dbReference type="ChEBI" id="CHEBI:456216"/>
        <dbReference type="EC" id="7.1.2.2"/>
    </reaction>
</comment>
<comment type="subunit">
    <text evidence="1">F-type ATPases have 2 components, CF(1) - the catalytic core - and CF(0) - the membrane proton channel. CF(1) has five subunits: alpha(3), beta(3), gamma(1), delta(1), epsilon(1). CF(0) has three main subunits: a(1), b(2) and c(9-12). The alpha and beta chains form an alternating ring which encloses part of the gamma chain. CF(1) is attached to CF(0) by a central stalk formed by the gamma and epsilon chains, while a peripheral stalk is formed by the delta and b chains.</text>
</comment>
<comment type="subcellular location">
    <subcellularLocation>
        <location evidence="1">Cell inner membrane</location>
        <topology evidence="1">Peripheral membrane protein</topology>
    </subcellularLocation>
</comment>
<comment type="similarity">
    <text evidence="1">Belongs to the ATPase alpha/beta chains family.</text>
</comment>
<feature type="chain" id="PRO_1000166597" description="ATP synthase subunit beta">
    <location>
        <begin position="1"/>
        <end position="474"/>
    </location>
</feature>
<feature type="binding site" evidence="1">
    <location>
        <begin position="152"/>
        <end position="159"/>
    </location>
    <ligand>
        <name>ATP</name>
        <dbReference type="ChEBI" id="CHEBI:30616"/>
    </ligand>
</feature>
<proteinExistence type="inferred from homology"/>
<keyword id="KW-0066">ATP synthesis</keyword>
<keyword id="KW-0067">ATP-binding</keyword>
<keyword id="KW-0997">Cell inner membrane</keyword>
<keyword id="KW-1003">Cell membrane</keyword>
<keyword id="KW-0139">CF(1)</keyword>
<keyword id="KW-0375">Hydrogen ion transport</keyword>
<keyword id="KW-0406">Ion transport</keyword>
<keyword id="KW-0472">Membrane</keyword>
<keyword id="KW-0547">Nucleotide-binding</keyword>
<keyword id="KW-1185">Reference proteome</keyword>
<keyword id="KW-1278">Translocase</keyword>
<keyword id="KW-0813">Transport</keyword>